<dbReference type="EMBL" id="AY855346">
    <property type="protein sequence ID" value="AAZ32264.1"/>
    <property type="molecule type" value="Genomic_DNA"/>
</dbReference>
<dbReference type="RefSeq" id="YP_529555.1">
    <property type="nucleotide sequence ID" value="NC_007917.1"/>
</dbReference>
<dbReference type="SMR" id="Q24LJ4"/>
<dbReference type="GeneID" id="3974462"/>
<dbReference type="KEGG" id="vg:3974462"/>
<dbReference type="Proteomes" id="UP000006649">
    <property type="component" value="Segment"/>
</dbReference>
<dbReference type="GO" id="GO:0019028">
    <property type="term" value="C:viral capsid"/>
    <property type="evidence" value="ECO:0007669"/>
    <property type="project" value="UniProtKB-KW"/>
</dbReference>
<dbReference type="GO" id="GO:0099000">
    <property type="term" value="P:symbiont genome ejection through host cell envelope, contractile tail mechanism"/>
    <property type="evidence" value="ECO:0007669"/>
    <property type="project" value="UniProtKB-KW"/>
</dbReference>
<dbReference type="InterPro" id="IPR021145">
    <property type="entry name" value="Portal_protein_SPP1_Gp6-like"/>
</dbReference>
<dbReference type="InterPro" id="IPR006428">
    <property type="entry name" value="Portal_SPP1-type"/>
</dbReference>
<dbReference type="NCBIfam" id="TIGR01538">
    <property type="entry name" value="portal_SPP1"/>
    <property type="match status" value="1"/>
</dbReference>
<dbReference type="Pfam" id="PF05133">
    <property type="entry name" value="SPP1_portal"/>
    <property type="match status" value="1"/>
</dbReference>
<reference key="1">
    <citation type="journal article" date="2006" name="J. Bacteriol.">
        <title>Genomic organization and molecular characterization of Clostridium difficile bacteriophage PhiCD119.</title>
        <authorList>
            <person name="Govind R."/>
            <person name="Fralick J.A."/>
            <person name="Rolfe R.D."/>
        </authorList>
    </citation>
    <scope>NUCLEOTIDE SEQUENCE [LARGE SCALE GENOMIC DNA]</scope>
</reference>
<proteinExistence type="inferred from homology"/>
<comment type="function">
    <text evidence="2">Forms the portal vertex of the capsid. This portal plays critical roles in head assembly, genome packaging, neck/tail attachment, and genome ejection. The portal protein multimerizes as a single ring-shaped homododecamer arranged around a central channel. Binds to the terminase subunits to form the packaging machine.</text>
</comment>
<comment type="subunit">
    <text evidence="2">Homododecamer.</text>
</comment>
<comment type="subcellular location">
    <subcellularLocation>
        <location evidence="1">Virion</location>
    </subcellularLocation>
</comment>
<comment type="similarity">
    <text evidence="3">Belongs to the SPP1-like portal protein family.</text>
</comment>
<sequence>MELEKIRAIISADAARRQEILQAKSYYYNKNDILKKGVVVQNRDENPLRNADNRISHNFHEILVDEKASYMFTYPVLFDIDNNKELNEKVTDVLGNEFTRKAKNLAIEASNCGSAWLHYWIDEEYSGEQVTNQTFKYGVVNTEEIIPIYRNGIERELEAVIRYYIQLEDVKGQIQKQAYTYVEFWTDKILDKYKFFGVSCCGSQIEHITVQHRFNSVPFVEFSNNIKKQSDLSKYKKILDLYDRVMSGFANDLEDIQQIIYILENFGGEDTSEFLKELKRYKTIKTETDSEGDSGGLKTMQIEIPTEARKIILEILKKQIYESGQGLQQDTENFGNASGVALKFFYRKLELKSGLLETEFRTSFDKLIKAILYFLGVTDYKKIQQTYTRNMMSNDLEDADIATKSVGIIPTKIILRHHPWVDDVEEAEKLYLEEKKIQASKVSDDYNNFTE</sequence>
<name>PORTL_BPPCD</name>
<organism>
    <name type="scientific">Clostridium phage phiCD119 (strain Clostridium difficile/United States/Govind/2006)</name>
    <name type="common">Bacteriophage phiCD119</name>
    <dbReference type="NCBI Taxonomy" id="2883936"/>
    <lineage>
        <taxon>Viruses</taxon>
        <taxon>Duplodnaviria</taxon>
        <taxon>Heunggongvirae</taxon>
        <taxon>Uroviricota</taxon>
        <taxon>Caudoviricetes</taxon>
        <taxon>Lubbockvirus</taxon>
        <taxon>Lubbockvirus CD119</taxon>
    </lineage>
</organism>
<feature type="chain" id="PRO_0000432535" description="Portal protein">
    <location>
        <begin position="1"/>
        <end position="451"/>
    </location>
</feature>
<accession>Q24LJ4</accession>
<evidence type="ECO:0000250" key="1">
    <source>
        <dbReference type="UniProtKB" id="P03710"/>
    </source>
</evidence>
<evidence type="ECO:0000250" key="2">
    <source>
        <dbReference type="UniProtKB" id="P54309"/>
    </source>
</evidence>
<evidence type="ECO:0000305" key="3"/>
<organismHost>
    <name type="scientific">Clostridioides difficile</name>
    <name type="common">Peptoclostridium difficile</name>
    <dbReference type="NCBI Taxonomy" id="1496"/>
</organismHost>
<protein>
    <recommendedName>
        <fullName>Portal protein</fullName>
    </recommendedName>
    <alternativeName>
        <fullName>Portal vertex protein</fullName>
    </alternativeName>
</protein>
<keyword id="KW-0167">Capsid protein</keyword>
<keyword id="KW-1185">Reference proteome</keyword>
<keyword id="KW-0118">Viral capsid assembly</keyword>
<keyword id="KW-1242">Viral contractile tail ejection system</keyword>
<keyword id="KW-1171">Viral genome ejection through host cell envelope</keyword>
<keyword id="KW-0231">Viral genome packaging</keyword>
<keyword id="KW-1162">Viral penetration into host cytoplasm</keyword>
<keyword id="KW-1188">Viral release from host cell</keyword>
<keyword id="KW-0946">Virion</keyword>
<keyword id="KW-1160">Virus entry into host cell</keyword>